<name>GOSR2_MOUSE</name>
<gene>
    <name type="primary">Gosr2</name>
    <name type="synonym">Gs27</name>
</gene>
<organism>
    <name type="scientific">Mus musculus</name>
    <name type="common">Mouse</name>
    <dbReference type="NCBI Taxonomy" id="10090"/>
    <lineage>
        <taxon>Eukaryota</taxon>
        <taxon>Metazoa</taxon>
        <taxon>Chordata</taxon>
        <taxon>Craniata</taxon>
        <taxon>Vertebrata</taxon>
        <taxon>Euteleostomi</taxon>
        <taxon>Mammalia</taxon>
        <taxon>Eutheria</taxon>
        <taxon>Euarchontoglires</taxon>
        <taxon>Glires</taxon>
        <taxon>Rodentia</taxon>
        <taxon>Myomorpha</taxon>
        <taxon>Muroidea</taxon>
        <taxon>Muridae</taxon>
        <taxon>Murinae</taxon>
        <taxon>Mus</taxon>
        <taxon>Mus</taxon>
    </lineage>
</organism>
<keyword id="KW-0007">Acetylation</keyword>
<keyword id="KW-0175">Coiled coil</keyword>
<keyword id="KW-0256">Endoplasmic reticulum</keyword>
<keyword id="KW-0333">Golgi apparatus</keyword>
<keyword id="KW-0472">Membrane</keyword>
<keyword id="KW-0653">Protein transport</keyword>
<keyword id="KW-1185">Reference proteome</keyword>
<keyword id="KW-0812">Transmembrane</keyword>
<keyword id="KW-1133">Transmembrane helix</keyword>
<keyword id="KW-0813">Transport</keyword>
<comment type="function">
    <text evidence="2">Involved in transport of proteins from the cis/medial-Golgi to the trans-Golgi network.</text>
</comment>
<comment type="subunit">
    <text evidence="1 2">Part of a unique SNARE complex composed of the Golgi SNAREs GOSR1, STX5 and YKT6. Interacts with BET1 (By similarity).</text>
</comment>
<comment type="subcellular location">
    <subcellularLocation>
        <location evidence="2">Golgi apparatus</location>
        <location evidence="2">cis-Golgi network membrane</location>
        <topology evidence="3">Single-pass type IV membrane protein</topology>
    </subcellularLocation>
    <subcellularLocation>
        <location evidence="2">Golgi apparatus membrane</location>
    </subcellularLocation>
    <subcellularLocation>
        <location evidence="2">Endoplasmic reticulum membrane</location>
    </subcellularLocation>
    <text evidence="2">Concentrated most in the intermediate compartment/cis-Golgi network and the cis-Golgi cisternae 1 and 2. Greatly reduced in concentration at the trans end of the Golgi apparatus.</text>
</comment>
<comment type="similarity">
    <text evidence="4">Belongs to the GOSR2 family.</text>
</comment>
<reference key="1">
    <citation type="journal article" date="1997" name="Nature">
        <title>A SNARE involved in protein transport through the Golgi apparatus.</title>
        <authorList>
            <person name="Lowe S.L."/>
            <person name="Peter F."/>
            <person name="Subramaniam V.N."/>
            <person name="Wong S.H."/>
            <person name="Hong W."/>
        </authorList>
    </citation>
    <scope>NUCLEOTIDE SEQUENCE [MRNA]</scope>
</reference>
<reference key="2">
    <citation type="journal article" date="2005" name="Science">
        <title>The transcriptional landscape of the mammalian genome.</title>
        <authorList>
            <person name="Carninci P."/>
            <person name="Kasukawa T."/>
            <person name="Katayama S."/>
            <person name="Gough J."/>
            <person name="Frith M.C."/>
            <person name="Maeda N."/>
            <person name="Oyama R."/>
            <person name="Ravasi T."/>
            <person name="Lenhard B."/>
            <person name="Wells C."/>
            <person name="Kodzius R."/>
            <person name="Shimokawa K."/>
            <person name="Bajic V.B."/>
            <person name="Brenner S.E."/>
            <person name="Batalov S."/>
            <person name="Forrest A.R."/>
            <person name="Zavolan M."/>
            <person name="Davis M.J."/>
            <person name="Wilming L.G."/>
            <person name="Aidinis V."/>
            <person name="Allen J.E."/>
            <person name="Ambesi-Impiombato A."/>
            <person name="Apweiler R."/>
            <person name="Aturaliya R.N."/>
            <person name="Bailey T.L."/>
            <person name="Bansal M."/>
            <person name="Baxter L."/>
            <person name="Beisel K.W."/>
            <person name="Bersano T."/>
            <person name="Bono H."/>
            <person name="Chalk A.M."/>
            <person name="Chiu K.P."/>
            <person name="Choudhary V."/>
            <person name="Christoffels A."/>
            <person name="Clutterbuck D.R."/>
            <person name="Crowe M.L."/>
            <person name="Dalla E."/>
            <person name="Dalrymple B.P."/>
            <person name="de Bono B."/>
            <person name="Della Gatta G."/>
            <person name="di Bernardo D."/>
            <person name="Down T."/>
            <person name="Engstrom P."/>
            <person name="Fagiolini M."/>
            <person name="Faulkner G."/>
            <person name="Fletcher C.F."/>
            <person name="Fukushima T."/>
            <person name="Furuno M."/>
            <person name="Futaki S."/>
            <person name="Gariboldi M."/>
            <person name="Georgii-Hemming P."/>
            <person name="Gingeras T.R."/>
            <person name="Gojobori T."/>
            <person name="Green R.E."/>
            <person name="Gustincich S."/>
            <person name="Harbers M."/>
            <person name="Hayashi Y."/>
            <person name="Hensch T.K."/>
            <person name="Hirokawa N."/>
            <person name="Hill D."/>
            <person name="Huminiecki L."/>
            <person name="Iacono M."/>
            <person name="Ikeo K."/>
            <person name="Iwama A."/>
            <person name="Ishikawa T."/>
            <person name="Jakt M."/>
            <person name="Kanapin A."/>
            <person name="Katoh M."/>
            <person name="Kawasawa Y."/>
            <person name="Kelso J."/>
            <person name="Kitamura H."/>
            <person name="Kitano H."/>
            <person name="Kollias G."/>
            <person name="Krishnan S.P."/>
            <person name="Kruger A."/>
            <person name="Kummerfeld S.K."/>
            <person name="Kurochkin I.V."/>
            <person name="Lareau L.F."/>
            <person name="Lazarevic D."/>
            <person name="Lipovich L."/>
            <person name="Liu J."/>
            <person name="Liuni S."/>
            <person name="McWilliam S."/>
            <person name="Madan Babu M."/>
            <person name="Madera M."/>
            <person name="Marchionni L."/>
            <person name="Matsuda H."/>
            <person name="Matsuzawa S."/>
            <person name="Miki H."/>
            <person name="Mignone F."/>
            <person name="Miyake S."/>
            <person name="Morris K."/>
            <person name="Mottagui-Tabar S."/>
            <person name="Mulder N."/>
            <person name="Nakano N."/>
            <person name="Nakauchi H."/>
            <person name="Ng P."/>
            <person name="Nilsson R."/>
            <person name="Nishiguchi S."/>
            <person name="Nishikawa S."/>
            <person name="Nori F."/>
            <person name="Ohara O."/>
            <person name="Okazaki Y."/>
            <person name="Orlando V."/>
            <person name="Pang K.C."/>
            <person name="Pavan W.J."/>
            <person name="Pavesi G."/>
            <person name="Pesole G."/>
            <person name="Petrovsky N."/>
            <person name="Piazza S."/>
            <person name="Reed J."/>
            <person name="Reid J.F."/>
            <person name="Ring B.Z."/>
            <person name="Ringwald M."/>
            <person name="Rost B."/>
            <person name="Ruan Y."/>
            <person name="Salzberg S.L."/>
            <person name="Sandelin A."/>
            <person name="Schneider C."/>
            <person name="Schoenbach C."/>
            <person name="Sekiguchi K."/>
            <person name="Semple C.A."/>
            <person name="Seno S."/>
            <person name="Sessa L."/>
            <person name="Sheng Y."/>
            <person name="Shibata Y."/>
            <person name="Shimada H."/>
            <person name="Shimada K."/>
            <person name="Silva D."/>
            <person name="Sinclair B."/>
            <person name="Sperling S."/>
            <person name="Stupka E."/>
            <person name="Sugiura K."/>
            <person name="Sultana R."/>
            <person name="Takenaka Y."/>
            <person name="Taki K."/>
            <person name="Tammoja K."/>
            <person name="Tan S.L."/>
            <person name="Tang S."/>
            <person name="Taylor M.S."/>
            <person name="Tegner J."/>
            <person name="Teichmann S.A."/>
            <person name="Ueda H.R."/>
            <person name="van Nimwegen E."/>
            <person name="Verardo R."/>
            <person name="Wei C.L."/>
            <person name="Yagi K."/>
            <person name="Yamanishi H."/>
            <person name="Zabarovsky E."/>
            <person name="Zhu S."/>
            <person name="Zimmer A."/>
            <person name="Hide W."/>
            <person name="Bult C."/>
            <person name="Grimmond S.M."/>
            <person name="Teasdale R.D."/>
            <person name="Liu E.T."/>
            <person name="Brusic V."/>
            <person name="Quackenbush J."/>
            <person name="Wahlestedt C."/>
            <person name="Mattick J.S."/>
            <person name="Hume D.A."/>
            <person name="Kai C."/>
            <person name="Sasaki D."/>
            <person name="Tomaru Y."/>
            <person name="Fukuda S."/>
            <person name="Kanamori-Katayama M."/>
            <person name="Suzuki M."/>
            <person name="Aoki J."/>
            <person name="Arakawa T."/>
            <person name="Iida J."/>
            <person name="Imamura K."/>
            <person name="Itoh M."/>
            <person name="Kato T."/>
            <person name="Kawaji H."/>
            <person name="Kawagashira N."/>
            <person name="Kawashima T."/>
            <person name="Kojima M."/>
            <person name="Kondo S."/>
            <person name="Konno H."/>
            <person name="Nakano K."/>
            <person name="Ninomiya N."/>
            <person name="Nishio T."/>
            <person name="Okada M."/>
            <person name="Plessy C."/>
            <person name="Shibata K."/>
            <person name="Shiraki T."/>
            <person name="Suzuki S."/>
            <person name="Tagami M."/>
            <person name="Waki K."/>
            <person name="Watahiki A."/>
            <person name="Okamura-Oho Y."/>
            <person name="Suzuki H."/>
            <person name="Kawai J."/>
            <person name="Hayashizaki Y."/>
        </authorList>
    </citation>
    <scope>NUCLEOTIDE SEQUENCE [LARGE SCALE MRNA]</scope>
    <source>
        <strain>C57BL/6J</strain>
        <tissue>Bone marrow</tissue>
        <tissue>Embryo</tissue>
        <tissue>Testis</tissue>
    </source>
</reference>
<reference key="3">
    <citation type="journal article" date="2004" name="Genome Res.">
        <title>The status, quality, and expansion of the NIH full-length cDNA project: the Mammalian Gene Collection (MGC).</title>
        <authorList>
            <consortium name="The MGC Project Team"/>
        </authorList>
    </citation>
    <scope>NUCLEOTIDE SEQUENCE [LARGE SCALE MRNA]</scope>
    <source>
        <strain>FVB/N</strain>
        <strain>FVB/N-3</strain>
        <tissue>Mammary gland</tissue>
    </source>
</reference>
<reference key="4">
    <citation type="journal article" date="2010" name="Cell">
        <title>A tissue-specific atlas of mouse protein phosphorylation and expression.</title>
        <authorList>
            <person name="Huttlin E.L."/>
            <person name="Jedrychowski M.P."/>
            <person name="Elias J.E."/>
            <person name="Goswami T."/>
            <person name="Rad R."/>
            <person name="Beausoleil S.A."/>
            <person name="Villen J."/>
            <person name="Haas W."/>
            <person name="Sowa M.E."/>
            <person name="Gygi S.P."/>
        </authorList>
    </citation>
    <scope>IDENTIFICATION BY MASS SPECTROMETRY [LARGE SCALE ANALYSIS]</scope>
    <source>
        <tissue>Brain</tissue>
        <tissue>Heart</tissue>
        <tissue>Kidney</tissue>
        <tissue>Lung</tissue>
        <tissue>Pancreas</tissue>
        <tissue>Spleen</tissue>
        <tissue>Testis</tissue>
    </source>
</reference>
<accession>O35166</accession>
<accession>Q3UDN0</accession>
<accession>Q9CR77</accession>
<sequence>MEPLYQQTNKQVQEIQSHMGRLERADKQSVHLVENEIQASIEQIFSHLERLEILSSKEPLNRRQNAKLRVDQLKYDVQHLQTALRNFQHRRQVREQQERQRDELLSRTFTTNDSDTTIPMDESLQFNSSLHNIHHGMDDLIGGGHSILEGLRAQRLTLKGTQKKILDIANMLGLSNTVMRLIEKRAFQDKYFMIGGMLLTCAVMFLVVQYLT</sequence>
<evidence type="ECO:0000250" key="1">
    <source>
        <dbReference type="UniProtKB" id="O14653"/>
    </source>
</evidence>
<evidence type="ECO:0000250" key="2">
    <source>
        <dbReference type="UniProtKB" id="O35165"/>
    </source>
</evidence>
<evidence type="ECO:0000255" key="3"/>
<evidence type="ECO:0000305" key="4"/>
<dbReference type="EMBL" id="AF007550">
    <property type="protein sequence ID" value="AAB82653.1"/>
    <property type="molecule type" value="mRNA"/>
</dbReference>
<dbReference type="EMBL" id="AK005697">
    <property type="protein sequence ID" value="BAB24194.1"/>
    <property type="molecule type" value="mRNA"/>
</dbReference>
<dbReference type="EMBL" id="AK013052">
    <property type="protein sequence ID" value="BAB28622.1"/>
    <property type="molecule type" value="mRNA"/>
</dbReference>
<dbReference type="EMBL" id="AK150004">
    <property type="protein sequence ID" value="BAE29231.1"/>
    <property type="molecule type" value="mRNA"/>
</dbReference>
<dbReference type="EMBL" id="BC008525">
    <property type="protein sequence ID" value="AAH08525.1"/>
    <property type="molecule type" value="mRNA"/>
</dbReference>
<dbReference type="EMBL" id="BC051253">
    <property type="protein sequence ID" value="AAH51253.1"/>
    <property type="molecule type" value="mRNA"/>
</dbReference>
<dbReference type="CCDS" id="CCDS25521.1"/>
<dbReference type="RefSeq" id="NP_062624.2">
    <property type="nucleotide sequence ID" value="NM_019650.3"/>
</dbReference>
<dbReference type="SMR" id="O35166"/>
<dbReference type="BioGRID" id="208018">
    <property type="interactions" value="3"/>
</dbReference>
<dbReference type="FunCoup" id="O35166">
    <property type="interactions" value="4414"/>
</dbReference>
<dbReference type="STRING" id="10090.ENSMUSP00000021329"/>
<dbReference type="PhosphoSitePlus" id="O35166"/>
<dbReference type="jPOST" id="O35166"/>
<dbReference type="PaxDb" id="10090-ENSMUSP00000021329"/>
<dbReference type="ProteomicsDB" id="271132"/>
<dbReference type="Pumba" id="O35166"/>
<dbReference type="DNASU" id="56494"/>
<dbReference type="Ensembl" id="ENSMUST00000021329.14">
    <property type="protein sequence ID" value="ENSMUSP00000021329.8"/>
    <property type="gene ID" value="ENSMUSG00000020946.14"/>
</dbReference>
<dbReference type="GeneID" id="56494"/>
<dbReference type="KEGG" id="mmu:56494"/>
<dbReference type="UCSC" id="uc007lvo.2">
    <property type="organism name" value="mouse"/>
</dbReference>
<dbReference type="AGR" id="MGI:1927204"/>
<dbReference type="CTD" id="9570"/>
<dbReference type="MGI" id="MGI:1927204">
    <property type="gene designation" value="Gosr2"/>
</dbReference>
<dbReference type="VEuPathDB" id="HostDB:ENSMUSG00000020946"/>
<dbReference type="eggNOG" id="KOG3251">
    <property type="taxonomic scope" value="Eukaryota"/>
</dbReference>
<dbReference type="GeneTree" id="ENSGT00950000183192"/>
<dbReference type="InParanoid" id="O35166"/>
<dbReference type="OMA" id="LKYDSRH"/>
<dbReference type="OrthoDB" id="158360at2759"/>
<dbReference type="PhylomeDB" id="O35166"/>
<dbReference type="TreeFam" id="TF313702"/>
<dbReference type="Reactome" id="R-MMU-204005">
    <property type="pathway name" value="COPII-mediated vesicle transport"/>
</dbReference>
<dbReference type="Reactome" id="R-MMU-5694530">
    <property type="pathway name" value="Cargo concentration in the ER"/>
</dbReference>
<dbReference type="Reactome" id="R-MMU-6807878">
    <property type="pathway name" value="COPI-mediated anterograde transport"/>
</dbReference>
<dbReference type="Reactome" id="R-MMU-6811438">
    <property type="pathway name" value="Intra-Golgi traffic"/>
</dbReference>
<dbReference type="BioGRID-ORCS" id="56494">
    <property type="hits" value="20 hits in 79 CRISPR screens"/>
</dbReference>
<dbReference type="ChiTaRS" id="Gosr2">
    <property type="organism name" value="mouse"/>
</dbReference>
<dbReference type="PRO" id="PR:O35166"/>
<dbReference type="Proteomes" id="UP000000589">
    <property type="component" value="Chromosome 11"/>
</dbReference>
<dbReference type="RNAct" id="O35166">
    <property type="molecule type" value="protein"/>
</dbReference>
<dbReference type="Bgee" id="ENSMUSG00000020946">
    <property type="expression patterns" value="Expressed in metanephric ureteric bud and 262 other cell types or tissues"/>
</dbReference>
<dbReference type="ExpressionAtlas" id="O35166">
    <property type="expression patterns" value="baseline and differential"/>
</dbReference>
<dbReference type="GO" id="GO:0005829">
    <property type="term" value="C:cytosol"/>
    <property type="evidence" value="ECO:0007669"/>
    <property type="project" value="Ensembl"/>
</dbReference>
<dbReference type="GO" id="GO:0005789">
    <property type="term" value="C:endoplasmic reticulum membrane"/>
    <property type="evidence" value="ECO:0000314"/>
    <property type="project" value="MGI"/>
</dbReference>
<dbReference type="GO" id="GO:0000139">
    <property type="term" value="C:Golgi membrane"/>
    <property type="evidence" value="ECO:0000314"/>
    <property type="project" value="MGI"/>
</dbReference>
<dbReference type="GO" id="GO:0005654">
    <property type="term" value="C:nucleoplasm"/>
    <property type="evidence" value="ECO:0007669"/>
    <property type="project" value="Ensembl"/>
</dbReference>
<dbReference type="GO" id="GO:0031201">
    <property type="term" value="C:SNARE complex"/>
    <property type="evidence" value="ECO:0000250"/>
    <property type="project" value="UniProtKB"/>
</dbReference>
<dbReference type="GO" id="GO:0005484">
    <property type="term" value="F:SNAP receptor activity"/>
    <property type="evidence" value="ECO:0007669"/>
    <property type="project" value="InterPro"/>
</dbReference>
<dbReference type="GO" id="GO:0006891">
    <property type="term" value="P:intra-Golgi vesicle-mediated transport"/>
    <property type="evidence" value="ECO:0000250"/>
    <property type="project" value="UniProtKB"/>
</dbReference>
<dbReference type="GO" id="GO:0015031">
    <property type="term" value="P:protein transport"/>
    <property type="evidence" value="ECO:0007669"/>
    <property type="project" value="UniProtKB-KW"/>
</dbReference>
<dbReference type="GO" id="GO:0016192">
    <property type="term" value="P:vesicle-mediated transport"/>
    <property type="evidence" value="ECO:0000314"/>
    <property type="project" value="MGI"/>
</dbReference>
<dbReference type="CDD" id="cd15863">
    <property type="entry name" value="SNARE_GS27"/>
    <property type="match status" value="1"/>
</dbReference>
<dbReference type="FunFam" id="1.20.5.110:FF:000044">
    <property type="entry name" value="Golgi SNAP receptor complex member 2"/>
    <property type="match status" value="1"/>
</dbReference>
<dbReference type="InterPro" id="IPR027027">
    <property type="entry name" value="GOSR2/Membrin/Bos1"/>
</dbReference>
<dbReference type="PANTHER" id="PTHR21230:SF1">
    <property type="entry name" value="GOLGI SNAP RECEPTOR COMPLEX MEMBER 2"/>
    <property type="match status" value="1"/>
</dbReference>
<dbReference type="PANTHER" id="PTHR21230">
    <property type="entry name" value="VESICLE TRANSPORT V-SNARE PROTEIN VTI1-RELATED"/>
    <property type="match status" value="1"/>
</dbReference>
<dbReference type="Pfam" id="PF12352">
    <property type="entry name" value="V-SNARE_C"/>
    <property type="match status" value="1"/>
</dbReference>
<dbReference type="PIRSF" id="PIRSF028865">
    <property type="entry name" value="Membrin-2"/>
    <property type="match status" value="1"/>
</dbReference>
<dbReference type="SUPFAM" id="SSF58038">
    <property type="entry name" value="SNARE fusion complex"/>
    <property type="match status" value="1"/>
</dbReference>
<proteinExistence type="evidence at protein level"/>
<protein>
    <recommendedName>
        <fullName>Golgi SNAP receptor complex member 2</fullName>
    </recommendedName>
    <alternativeName>
        <fullName>27 kDa Golgi SNARE protein</fullName>
    </alternativeName>
    <alternativeName>
        <fullName>Membrin</fullName>
    </alternativeName>
</protein>
<feature type="chain" id="PRO_0000212550" description="Golgi SNAP receptor complex member 2">
    <location>
        <begin position="1"/>
        <end position="212"/>
    </location>
</feature>
<feature type="topological domain" description="Cytoplasmic" evidence="3">
    <location>
        <begin position="1"/>
        <end position="190"/>
    </location>
</feature>
<feature type="transmembrane region" description="Helical; Anchor for type IV membrane protein" evidence="3">
    <location>
        <begin position="191"/>
        <end position="211"/>
    </location>
</feature>
<feature type="topological domain" description="Vesicular" evidence="3">
    <location>
        <position position="212"/>
    </location>
</feature>
<feature type="coiled-coil region" evidence="3">
    <location>
        <begin position="60"/>
        <end position="92"/>
    </location>
</feature>
<feature type="short sequence motif" description="IxM motif; signal for cargo packaging into COPII-coated vesicles" evidence="1">
    <location>
        <begin position="118"/>
        <end position="120"/>
    </location>
</feature>
<feature type="modified residue" description="N-acetylmethionine" evidence="1">
    <location>
        <position position="1"/>
    </location>
</feature>
<feature type="sequence conflict" description="In Ref. 1; AAB82653." evidence="4" ref="1">
    <original>R</original>
    <variation>I</variation>
    <location>
        <position position="99"/>
    </location>
</feature>